<comment type="similarity">
    <text evidence="2">Belongs to the UPF0357 family.</text>
</comment>
<comment type="sequence caution" evidence="2">
    <conflict type="frameshift">
        <sequence resource="EMBL" id="X59720"/>
    </conflict>
</comment>
<protein>
    <recommendedName>
        <fullName>UPF0357 protein YCL012C</fullName>
    </recommendedName>
</protein>
<dbReference type="EMBL" id="X59720">
    <property type="status" value="NOT_ANNOTATED_CDS"/>
    <property type="molecule type" value="Genomic_DNA"/>
</dbReference>
<dbReference type="EMBL" id="AY178910">
    <property type="protein sequence ID" value="AAN86070.1"/>
    <property type="molecule type" value="Genomic_DNA"/>
</dbReference>
<dbReference type="EMBL" id="BK006937">
    <property type="protein sequence ID" value="DAA07469.1"/>
    <property type="molecule type" value="Genomic_DNA"/>
</dbReference>
<dbReference type="SMR" id="Q8J0M4"/>
<dbReference type="BioGRID" id="37087">
    <property type="interactions" value="5"/>
</dbReference>
<dbReference type="FunCoup" id="Q8J0M4">
    <property type="interactions" value="8"/>
</dbReference>
<dbReference type="STRING" id="4932.YCL012C"/>
<dbReference type="iPTMnet" id="Q8J0M4"/>
<dbReference type="PaxDb" id="4932-YCL012C"/>
<dbReference type="PeptideAtlas" id="Q8J0M4"/>
<dbReference type="EnsemblFungi" id="YCL012C_mRNA">
    <property type="protein sequence ID" value="YCL012C"/>
    <property type="gene ID" value="YCL012C"/>
</dbReference>
<dbReference type="GeneID" id="2746859"/>
<dbReference type="KEGG" id="sce:YCL012C"/>
<dbReference type="AGR" id="SGD:S000029705"/>
<dbReference type="SGD" id="S000029705">
    <property type="gene designation" value="YCL012C"/>
</dbReference>
<dbReference type="VEuPathDB" id="FungiDB:YCL012C"/>
<dbReference type="eggNOG" id="ENOG502S73R">
    <property type="taxonomic scope" value="Eukaryota"/>
</dbReference>
<dbReference type="HOGENOM" id="CLU_128832_0_1_1"/>
<dbReference type="InParanoid" id="Q8J0M4"/>
<dbReference type="OMA" id="NIRDGDS"/>
<dbReference type="OrthoDB" id="447314at2759"/>
<dbReference type="BioCyc" id="YEAST:G3O-29429-MONOMER"/>
<dbReference type="BioGRID-ORCS" id="2746859">
    <property type="hits" value="0 hits in 10 CRISPR screens"/>
</dbReference>
<dbReference type="PRO" id="PR:Q8J0M4"/>
<dbReference type="Proteomes" id="UP000002311">
    <property type="component" value="Chromosome III"/>
</dbReference>
<dbReference type="RNAct" id="Q8J0M4">
    <property type="molecule type" value="protein"/>
</dbReference>
<dbReference type="InterPro" id="IPR018559">
    <property type="entry name" value="DUF2015"/>
</dbReference>
<dbReference type="PANTHER" id="PTHR28023">
    <property type="entry name" value="UPF0357 PROTEIN YCL012C"/>
    <property type="match status" value="1"/>
</dbReference>
<dbReference type="PANTHER" id="PTHR28023:SF1">
    <property type="entry name" value="UPF0357 PROTEIN YCL012C"/>
    <property type="match status" value="1"/>
</dbReference>
<dbReference type="Pfam" id="PF09435">
    <property type="entry name" value="DUF2015"/>
    <property type="match status" value="1"/>
</dbReference>
<proteinExistence type="evidence at protein level"/>
<gene>
    <name type="ordered locus">YCL012C</name>
    <name type="ORF">YCL011C-A</name>
</gene>
<name>YCB2_YEAST</name>
<keyword id="KW-1017">Isopeptide bond</keyword>
<keyword id="KW-0597">Phosphoprotein</keyword>
<keyword id="KW-1185">Reference proteome</keyword>
<keyword id="KW-0732">Signal</keyword>
<keyword id="KW-0832">Ubl conjugation</keyword>
<feature type="signal peptide" evidence="1">
    <location>
        <begin position="1"/>
        <end position="23"/>
    </location>
</feature>
<feature type="chain" id="PRO_0000045281" description="UPF0357 protein YCL012C">
    <location>
        <begin position="24"/>
        <end position="134"/>
    </location>
</feature>
<feature type="modified residue" description="Phosphoserine" evidence="3">
    <location>
        <position position="71"/>
    </location>
</feature>
<feature type="modified residue" description="Phosphoserine" evidence="3">
    <location>
        <position position="74"/>
    </location>
</feature>
<feature type="cross-link" description="Glycyl lysine isopeptide (Lys-Gly) (interchain with G-Cter in ubiquitin)" evidence="4">
    <location>
        <position position="86"/>
    </location>
</feature>
<evidence type="ECO:0000255" key="1"/>
<evidence type="ECO:0000305" key="2"/>
<evidence type="ECO:0007744" key="3">
    <source>
    </source>
</evidence>
<evidence type="ECO:0007744" key="4">
    <source>
    </source>
</evidence>
<accession>Q8J0M4</accession>
<accession>D6VR00</accession>
<organism>
    <name type="scientific">Saccharomyces cerevisiae (strain ATCC 204508 / S288c)</name>
    <name type="common">Baker's yeast</name>
    <dbReference type="NCBI Taxonomy" id="559292"/>
    <lineage>
        <taxon>Eukaryota</taxon>
        <taxon>Fungi</taxon>
        <taxon>Dikarya</taxon>
        <taxon>Ascomycota</taxon>
        <taxon>Saccharomycotina</taxon>
        <taxon>Saccharomycetes</taxon>
        <taxon>Saccharomycetales</taxon>
        <taxon>Saccharomycetaceae</taxon>
        <taxon>Saccharomyces</taxon>
    </lineage>
</organism>
<sequence>MKSLFYLKLLLWVVLLSLCLLMAHRKTKVADKFRALRSRIQLRFNRHIRLNDSFADDLENGLHSRNFDIISENSNDVRGGLDDVSKNEIKQIMENDNVDFDKARLLYMERKFGQNGIAPDGTPIDPKAFTFDSR</sequence>
<reference key="1">
    <citation type="journal article" date="1992" name="Nature">
        <title>The complete DNA sequence of yeast chromosome III.</title>
        <authorList>
            <person name="Oliver S.G."/>
            <person name="van der Aart Q.J.M."/>
            <person name="Agostoni-Carbone M.L."/>
            <person name="Aigle M."/>
            <person name="Alberghina L."/>
            <person name="Alexandraki D."/>
            <person name="Antoine G."/>
            <person name="Anwar R."/>
            <person name="Ballesta J.P.G."/>
            <person name="Benit P."/>
            <person name="Berben G."/>
            <person name="Bergantino E."/>
            <person name="Biteau N."/>
            <person name="Bolle P.-A."/>
            <person name="Bolotin-Fukuhara M."/>
            <person name="Brown A."/>
            <person name="Brown A.J.P."/>
            <person name="Buhler J.-M."/>
            <person name="Carcano C."/>
            <person name="Carignani G."/>
            <person name="Cederberg H."/>
            <person name="Chanet R."/>
            <person name="Contreras R."/>
            <person name="Crouzet M."/>
            <person name="Daignan-Fornier B."/>
            <person name="Defoor E."/>
            <person name="Delgado M.D."/>
            <person name="Demolder J."/>
            <person name="Doira C."/>
            <person name="Dubois E."/>
            <person name="Dujon B."/>
            <person name="Duesterhoeft A."/>
            <person name="Erdmann D."/>
            <person name="Esteban M."/>
            <person name="Fabre F."/>
            <person name="Fairhead C."/>
            <person name="Faye G."/>
            <person name="Feldmann H."/>
            <person name="Fiers W."/>
            <person name="Francingues-Gaillard M.-C."/>
            <person name="Franco L."/>
            <person name="Frontali L."/>
            <person name="Fukuhara H."/>
            <person name="Fuller L.J."/>
            <person name="Galland P."/>
            <person name="Gent M.E."/>
            <person name="Gigot D."/>
            <person name="Gilliquet V."/>
            <person name="Glansdorff N."/>
            <person name="Goffeau A."/>
            <person name="Grenson M."/>
            <person name="Grisanti P."/>
            <person name="Grivell L.A."/>
            <person name="de Haan M."/>
            <person name="Haasemann M."/>
            <person name="Hatat D."/>
            <person name="Hoenicka J."/>
            <person name="Hegemann J.H."/>
            <person name="Herbert C.J."/>
            <person name="Hilger F."/>
            <person name="Hohmann S."/>
            <person name="Hollenberg C.P."/>
            <person name="Huse K."/>
            <person name="Iborra F."/>
            <person name="Indge K.J."/>
            <person name="Isono K."/>
            <person name="Jacq C."/>
            <person name="Jacquet M."/>
            <person name="James C.M."/>
            <person name="Jauniaux J.-C."/>
            <person name="Jia Y."/>
            <person name="Jimenez A."/>
            <person name="Kelly A."/>
            <person name="Kleinhans U."/>
            <person name="Kreisl P."/>
            <person name="Lanfranchi G."/>
            <person name="Lewis C."/>
            <person name="van der Linden C.G."/>
            <person name="Lucchini G."/>
            <person name="Lutzenkirchen K."/>
            <person name="Maat M.J."/>
            <person name="Mallet L."/>
            <person name="Mannhaupt G."/>
            <person name="Martegani E."/>
            <person name="Mathieu A."/>
            <person name="Maurer C.T.C."/>
            <person name="McConnell D."/>
            <person name="McKee R.A."/>
            <person name="Messenguy F."/>
            <person name="Mewes H.-W."/>
            <person name="Molemans F."/>
            <person name="Montague M.A."/>
            <person name="Muzi Falconi M."/>
            <person name="Navas L."/>
            <person name="Newlon C.S."/>
            <person name="Noone D."/>
            <person name="Pallier C."/>
            <person name="Panzeri L."/>
            <person name="Pearson B.M."/>
            <person name="Perea J."/>
            <person name="Philippsen P."/>
            <person name="Pierard A."/>
            <person name="Planta R.J."/>
            <person name="Plevani P."/>
            <person name="Poetsch B."/>
            <person name="Pohl F.M."/>
            <person name="Purnelle B."/>
            <person name="Ramezani Rad M."/>
            <person name="Rasmussen S.W."/>
            <person name="Raynal A."/>
            <person name="Remacha M.A."/>
            <person name="Richterich P."/>
            <person name="Roberts A.B."/>
            <person name="Rodriguez F."/>
            <person name="Sanz E."/>
            <person name="Schaaff-Gerstenschlaeger I."/>
            <person name="Scherens B."/>
            <person name="Schweitzer B."/>
            <person name="Shu Y."/>
            <person name="Skala J."/>
            <person name="Slonimski P.P."/>
            <person name="Sor F."/>
            <person name="Soustelle C."/>
            <person name="Spiegelberg R."/>
            <person name="Stateva L.I."/>
            <person name="Steensma H.Y."/>
            <person name="Steiner S."/>
            <person name="Thierry A."/>
            <person name="Thireos G."/>
            <person name="Tzermia M."/>
            <person name="Urrestarazu L.A."/>
            <person name="Valle G."/>
            <person name="Vetter I."/>
            <person name="van Vliet-Reedijk J.C."/>
            <person name="Voet M."/>
            <person name="Volckaert G."/>
            <person name="Vreken P."/>
            <person name="Wang H."/>
            <person name="Warmington J.R."/>
            <person name="von Wettstein D."/>
            <person name="Wicksteed B.L."/>
            <person name="Wilson C."/>
            <person name="Wurst H."/>
            <person name="Xu G."/>
            <person name="Yoshikawa A."/>
            <person name="Zimmermann F.K."/>
            <person name="Sgouros J.G."/>
        </authorList>
    </citation>
    <scope>NUCLEOTIDE SEQUENCE [LARGE SCALE GENOMIC DNA]</scope>
    <source>
        <strain>ATCC 204508 / S288c</strain>
    </source>
</reference>
<reference key="2">
    <citation type="journal article" date="2014" name="G3 (Bethesda)">
        <title>The reference genome sequence of Saccharomyces cerevisiae: Then and now.</title>
        <authorList>
            <person name="Engel S.R."/>
            <person name="Dietrich F.S."/>
            <person name="Fisk D.G."/>
            <person name="Binkley G."/>
            <person name="Balakrishnan R."/>
            <person name="Costanzo M.C."/>
            <person name="Dwight S.S."/>
            <person name="Hitz B.C."/>
            <person name="Karra K."/>
            <person name="Nash R.S."/>
            <person name="Weng S."/>
            <person name="Wong E.D."/>
            <person name="Lloyd P."/>
            <person name="Skrzypek M.S."/>
            <person name="Miyasato S.R."/>
            <person name="Simison M."/>
            <person name="Cherry J.M."/>
        </authorList>
    </citation>
    <scope>GENOME REANNOTATION</scope>
    <source>
        <strain>ATCC 204508 / S288c</strain>
    </source>
</reference>
<reference key="3">
    <citation type="journal article" date="2003" name="Yeast">
        <title>Verification of a new gene on Saccharomyces cerevisiae chromosome III.</title>
        <authorList>
            <person name="Zhang Z."/>
            <person name="Dietrich F.S."/>
        </authorList>
    </citation>
    <scope>NUCLEOTIDE SEQUENCE [GENOMIC DNA] OF 19-134</scope>
    <source>
        <strain>ATCC 204511 / S288c / AB972</strain>
    </source>
</reference>
<reference key="4">
    <citation type="journal article" date="2008" name="Mol. Cell. Proteomics">
        <title>A multidimensional chromatography technology for in-depth phosphoproteome analysis.</title>
        <authorList>
            <person name="Albuquerque C.P."/>
            <person name="Smolka M.B."/>
            <person name="Payne S.H."/>
            <person name="Bafna V."/>
            <person name="Eng J."/>
            <person name="Zhou H."/>
        </authorList>
    </citation>
    <scope>PHOSPHORYLATION [LARGE SCALE ANALYSIS] AT SER-71 AND SER-74</scope>
    <scope>IDENTIFICATION BY MASS SPECTROMETRY [LARGE SCALE ANALYSIS]</scope>
</reference>
<reference key="5">
    <citation type="journal article" date="2012" name="Proteomics">
        <title>Sites of ubiquitin attachment in Saccharomyces cerevisiae.</title>
        <authorList>
            <person name="Starita L.M."/>
            <person name="Lo R.S."/>
            <person name="Eng J.K."/>
            <person name="von Haller P.D."/>
            <person name="Fields S."/>
        </authorList>
    </citation>
    <scope>UBIQUITINATION [LARGE SCALE ANALYSIS] AT LYS-86</scope>
    <scope>IDENTIFICATION BY MASS SPECTROMETRY [LARGE SCALE ANALYSIS]</scope>
</reference>